<proteinExistence type="evidence at protein level"/>
<accession>P31985</accession>
<evidence type="ECO:0000250" key="1"/>
<evidence type="ECO:0000250" key="2">
    <source>
        <dbReference type="UniProtKB" id="Q0NZX5"/>
    </source>
</evidence>
<evidence type="ECO:0000255" key="3">
    <source>
        <dbReference type="PROSITE-ProRule" id="PRU00068"/>
    </source>
</evidence>
<evidence type="ECO:0000256" key="4">
    <source>
        <dbReference type="SAM" id="MobiDB-lite"/>
    </source>
</evidence>
<evidence type="ECO:0000269" key="5">
    <source>
    </source>
</evidence>
<evidence type="ECO:0000303" key="6">
    <source>
    </source>
</evidence>
<evidence type="ECO:0000305" key="7"/>
<evidence type="ECO:0000305" key="8">
    <source>
    </source>
</evidence>
<name>VM2I_CROCE</name>
<organism>
    <name type="scientific">Crotalus cerberus</name>
    <name type="common">Arizona black rattlesnake</name>
    <name type="synonym">Crotalus oreganus cerberus</name>
    <dbReference type="NCBI Taxonomy" id="36309"/>
    <lineage>
        <taxon>Eukaryota</taxon>
        <taxon>Metazoa</taxon>
        <taxon>Chordata</taxon>
        <taxon>Craniata</taxon>
        <taxon>Vertebrata</taxon>
        <taxon>Euteleostomi</taxon>
        <taxon>Lepidosauria</taxon>
        <taxon>Squamata</taxon>
        <taxon>Bifurcata</taxon>
        <taxon>Unidentata</taxon>
        <taxon>Episquamata</taxon>
        <taxon>Toxicofera</taxon>
        <taxon>Serpentes</taxon>
        <taxon>Colubroidea</taxon>
        <taxon>Viperidae</taxon>
        <taxon>Crotalinae</taxon>
        <taxon>Crotalus</taxon>
    </lineage>
</organism>
<sequence>EAGEECDCGSPANPCCDAATCKLRPGAQCAEGLCCDQCRFIKKGKICRRARGDNPDDRCTGQSADCPRNRFH</sequence>
<feature type="chain" id="PRO_0000101795" description="Disintegrin cereberin" evidence="5">
    <location>
        <begin position="1"/>
        <end position="72"/>
    </location>
</feature>
<feature type="domain" description="Disintegrin" evidence="3">
    <location>
        <begin position="1"/>
        <end position="72"/>
    </location>
</feature>
<feature type="region of interest" description="Disordered" evidence="4">
    <location>
        <begin position="51"/>
        <end position="72"/>
    </location>
</feature>
<feature type="short sequence motif" description="Cell attachment site">
    <location>
        <begin position="51"/>
        <end position="53"/>
    </location>
</feature>
<feature type="disulfide bond" evidence="2">
    <location>
        <begin position="6"/>
        <end position="21"/>
    </location>
</feature>
<feature type="disulfide bond" evidence="2">
    <location>
        <begin position="8"/>
        <end position="16"/>
    </location>
</feature>
<feature type="disulfide bond" evidence="2">
    <location>
        <begin position="15"/>
        <end position="38"/>
    </location>
</feature>
<feature type="disulfide bond" evidence="2">
    <location>
        <begin position="29"/>
        <end position="35"/>
    </location>
</feature>
<feature type="disulfide bond" evidence="2">
    <location>
        <begin position="34"/>
        <end position="59"/>
    </location>
</feature>
<feature type="disulfide bond" evidence="2 3">
    <location>
        <begin position="47"/>
        <end position="66"/>
    </location>
</feature>
<dbReference type="PIR" id="B43020">
    <property type="entry name" value="B43020"/>
</dbReference>
<dbReference type="SMR" id="P31985"/>
<dbReference type="GO" id="GO:0005576">
    <property type="term" value="C:extracellular region"/>
    <property type="evidence" value="ECO:0007669"/>
    <property type="project" value="UniProtKB-SubCell"/>
</dbReference>
<dbReference type="GO" id="GO:0005886">
    <property type="term" value="C:plasma membrane"/>
    <property type="evidence" value="ECO:0007669"/>
    <property type="project" value="TreeGrafter"/>
</dbReference>
<dbReference type="GO" id="GO:0090729">
    <property type="term" value="F:toxin activity"/>
    <property type="evidence" value="ECO:0007669"/>
    <property type="project" value="UniProtKB-KW"/>
</dbReference>
<dbReference type="FunFam" id="4.10.70.10:FF:000005">
    <property type="entry name" value="Zinc metalloproteinase/disintegrin"/>
    <property type="match status" value="1"/>
</dbReference>
<dbReference type="Gene3D" id="4.10.70.10">
    <property type="entry name" value="Disintegrin domain"/>
    <property type="match status" value="1"/>
</dbReference>
<dbReference type="InterPro" id="IPR018358">
    <property type="entry name" value="Disintegrin_CS"/>
</dbReference>
<dbReference type="InterPro" id="IPR001762">
    <property type="entry name" value="Disintegrin_dom"/>
</dbReference>
<dbReference type="InterPro" id="IPR036436">
    <property type="entry name" value="Disintegrin_dom_sf"/>
</dbReference>
<dbReference type="PANTHER" id="PTHR11905">
    <property type="entry name" value="ADAM A DISINTEGRIN AND METALLOPROTEASE DOMAIN"/>
    <property type="match status" value="1"/>
</dbReference>
<dbReference type="PANTHER" id="PTHR11905:SF32">
    <property type="entry name" value="DISINTEGRIN AND METALLOPROTEINASE DOMAIN-CONTAINING PROTEIN 28"/>
    <property type="match status" value="1"/>
</dbReference>
<dbReference type="Pfam" id="PF00200">
    <property type="entry name" value="Disintegrin"/>
    <property type="match status" value="1"/>
</dbReference>
<dbReference type="PRINTS" id="PR00289">
    <property type="entry name" value="DISINTEGRIN"/>
</dbReference>
<dbReference type="SMART" id="SM00050">
    <property type="entry name" value="DISIN"/>
    <property type="match status" value="1"/>
</dbReference>
<dbReference type="SUPFAM" id="SSF57552">
    <property type="entry name" value="Blood coagulation inhibitor (disintegrin)"/>
    <property type="match status" value="1"/>
</dbReference>
<dbReference type="PROSITE" id="PS00427">
    <property type="entry name" value="DISINTEGRIN_1"/>
    <property type="match status" value="1"/>
</dbReference>
<dbReference type="PROSITE" id="PS50214">
    <property type="entry name" value="DISINTEGRIN_2"/>
    <property type="match status" value="1"/>
</dbReference>
<protein>
    <recommendedName>
        <fullName evidence="6">Disintegrin cereberin</fullName>
    </recommendedName>
    <alternativeName>
        <fullName>Platelet aggregation activation inhibitor</fullName>
    </alternativeName>
</protein>
<reference key="1">
    <citation type="journal article" date="1993" name="J. Biol. Chem.">
        <title>Characterization of the integrin specificities of disintegrins isolated from American pit viper venoms.</title>
        <authorList>
            <person name="Scarborough R.M."/>
            <person name="Rose J.W."/>
            <person name="Naughton M.A."/>
            <person name="Phillips D.R."/>
            <person name="Nannizzi L."/>
            <person name="Arfsten A."/>
            <person name="Campbell A.M."/>
            <person name="Charo I.F."/>
        </authorList>
    </citation>
    <scope>PROTEIN SEQUENCE</scope>
    <scope>SUBCELLULAR LOCATION</scope>
    <source>
        <tissue>Venom</tissue>
    </source>
</reference>
<keyword id="KW-1217">Cell adhesion impairing toxin</keyword>
<keyword id="KW-0903">Direct protein sequencing</keyword>
<keyword id="KW-1015">Disulfide bond</keyword>
<keyword id="KW-1199">Hemostasis impairing toxin</keyword>
<keyword id="KW-1201">Platelet aggregation inhibiting toxin</keyword>
<keyword id="KW-0964">Secreted</keyword>
<keyword id="KW-0800">Toxin</keyword>
<comment type="function">
    <text>Inhibits fibrinogen interaction with platelet. Acts by binding to alpha-IIb/beta-3 (ITGA2B/ITGB3) on the platelet surface and inhibits aggregation induced by ADP, thrombin, platelet-activating factor and collagen.</text>
</comment>
<comment type="subunit">
    <text evidence="1">Monomer (disintegrin).</text>
</comment>
<comment type="subcellular location">
    <subcellularLocation>
        <location evidence="5">Secreted</location>
    </subcellularLocation>
</comment>
<comment type="tissue specificity">
    <text evidence="8">Expressed by the venom gland.</text>
</comment>
<comment type="miscellaneous">
    <text>The disintegrin belongs to the medium disintegrin subfamily.</text>
</comment>
<comment type="similarity">
    <text evidence="7">Belongs to the venom metalloproteinase (M12B) family. P-II subfamily. P-IIa sub-subfamily.</text>
</comment>